<reference key="1">
    <citation type="journal article" date="2005" name="Nucleic Acids Res.">
        <title>Genome dynamics and diversity of Shigella species, the etiologic agents of bacillary dysentery.</title>
        <authorList>
            <person name="Yang F."/>
            <person name="Yang J."/>
            <person name="Zhang X."/>
            <person name="Chen L."/>
            <person name="Jiang Y."/>
            <person name="Yan Y."/>
            <person name="Tang X."/>
            <person name="Wang J."/>
            <person name="Xiong Z."/>
            <person name="Dong J."/>
            <person name="Xue Y."/>
            <person name="Zhu Y."/>
            <person name="Xu X."/>
            <person name="Sun L."/>
            <person name="Chen S."/>
            <person name="Nie H."/>
            <person name="Peng J."/>
            <person name="Xu J."/>
            <person name="Wang Y."/>
            <person name="Yuan Z."/>
            <person name="Wen Y."/>
            <person name="Yao Z."/>
            <person name="Shen Y."/>
            <person name="Qiang B."/>
            <person name="Hou Y."/>
            <person name="Yu J."/>
            <person name="Jin Q."/>
        </authorList>
    </citation>
    <scope>NUCLEOTIDE SEQUENCE [LARGE SCALE GENOMIC DNA]</scope>
    <source>
        <strain>Sd197</strain>
    </source>
</reference>
<sequence length="545" mass="61973">MLPINNNFSLPQNSFYNTISGTYADYFSAWDKWEKQALPGEERDEAVSRLKECLINNSDELRLDRLNLSSLPDNLPAQITLLNVSYNQLTNLPELPVTLKKLYSASNKLSELPVLPPALESLQVQHNELENLPALPDSLLTMNISYNEIVSLPSLPQALKNLRATRNFLTELPAFSEGNNPVVREYFFDRNQISHIPESILNLRNECSIHISDNPLSSHALQALQRLTSSPDYHGPRIYFSMSDGQQNTLHRPLADAVTAWFPENKQSDVSQTWHAFEHEEHANTFSAFLDRLSDTVSARNTSGFREQVAAWLEKLSASAELRQQSFAVAADATESCEDRVALTWNNLRKTLLVHQASEGLFDNDTGALLSLGREMFRLEILEDIARDKVRTLHFVDEIEVYLAFQTMLAEKLQLSTAVKEMRFYGVSGVTANDLRTAEAMVRSREENEFTDWFSLWGPWHAVLKRTEADRWALAEEQKYEMLENEYPQRVADRLKASGLSGDADAEREAGAQVMRETEQQIYRQLTDEVLALRLSENGSQLHHS</sequence>
<evidence type="ECO:0000250" key="1"/>
<evidence type="ECO:0000250" key="2">
    <source>
        <dbReference type="UniProtKB" id="P0CE12"/>
    </source>
</evidence>
<evidence type="ECO:0000250" key="3">
    <source>
        <dbReference type="UniProtKB" id="Q8VSC3"/>
    </source>
</evidence>
<evidence type="ECO:0000255" key="4">
    <source>
        <dbReference type="PROSITE-ProRule" id="PRU01398"/>
    </source>
</evidence>
<evidence type="ECO:0000305" key="5"/>
<accession>Q326Z6</accession>
<dbReference type="EC" id="2.3.2.27" evidence="3"/>
<dbReference type="EMBL" id="CP000035">
    <property type="protein sequence ID" value="ABB64612.1"/>
    <property type="status" value="ALT_INIT"/>
    <property type="molecule type" value="Genomic_DNA"/>
</dbReference>
<dbReference type="RefSeq" id="WP_000936809.1">
    <property type="nucleotide sequence ID" value="NC_007607.1"/>
</dbReference>
<dbReference type="RefSeq" id="YP_406100.1">
    <property type="nucleotide sequence ID" value="NC_007607.1"/>
</dbReference>
<dbReference type="SMR" id="Q326Z6"/>
<dbReference type="STRING" id="300267.SDY_2001"/>
<dbReference type="EnsemblBacteria" id="ABB64612">
    <property type="protein sequence ID" value="ABB64612"/>
    <property type="gene ID" value="SDY_P099"/>
</dbReference>
<dbReference type="KEGG" id="sdy:SDY_P099"/>
<dbReference type="PATRIC" id="fig|300267.13.peg.5651"/>
<dbReference type="HOGENOM" id="CLU_018533_2_0_6"/>
<dbReference type="Proteomes" id="UP000002716">
    <property type="component" value="Plasmid pSD1_197"/>
</dbReference>
<dbReference type="GO" id="GO:0005576">
    <property type="term" value="C:extracellular region"/>
    <property type="evidence" value="ECO:0000250"/>
    <property type="project" value="UniProtKB"/>
</dbReference>
<dbReference type="GO" id="GO:0044164">
    <property type="term" value="C:host cell cytosol"/>
    <property type="evidence" value="ECO:0000250"/>
    <property type="project" value="UniProtKB"/>
</dbReference>
<dbReference type="GO" id="GO:0042025">
    <property type="term" value="C:host cell nucleus"/>
    <property type="evidence" value="ECO:0000250"/>
    <property type="project" value="UniProtKB"/>
</dbReference>
<dbReference type="GO" id="GO:0061630">
    <property type="term" value="F:ubiquitin protein ligase activity"/>
    <property type="evidence" value="ECO:0000250"/>
    <property type="project" value="UniProtKB"/>
</dbReference>
<dbReference type="GO" id="GO:0004842">
    <property type="term" value="F:ubiquitin-protein transferase activity"/>
    <property type="evidence" value="ECO:0000250"/>
    <property type="project" value="UniProtKB"/>
</dbReference>
<dbReference type="GO" id="GO:0044314">
    <property type="term" value="P:protein K27-linked ubiquitination"/>
    <property type="evidence" value="ECO:0000250"/>
    <property type="project" value="UniProtKB"/>
</dbReference>
<dbReference type="GO" id="GO:0070936">
    <property type="term" value="P:protein K48-linked ubiquitination"/>
    <property type="evidence" value="ECO:0000250"/>
    <property type="project" value="UniProtKB"/>
</dbReference>
<dbReference type="GO" id="GO:0052170">
    <property type="term" value="P:symbiont-mediated suppression of host innate immune response"/>
    <property type="evidence" value="ECO:0000250"/>
    <property type="project" value="UniProtKB"/>
</dbReference>
<dbReference type="FunFam" id="1.20.58.90:FF:000007">
    <property type="entry name" value="E3 ubiquitin-protein ligase ipaH9.8"/>
    <property type="match status" value="1"/>
</dbReference>
<dbReference type="FunFam" id="1.20.1270.130:FF:000001">
    <property type="entry name" value="Invasion plasmid antigen IpaH"/>
    <property type="match status" value="1"/>
</dbReference>
<dbReference type="FunFam" id="1.20.58.360:FF:000001">
    <property type="entry name" value="Probable E3 ubiquitin-protein ligase ipaH7.8"/>
    <property type="match status" value="1"/>
</dbReference>
<dbReference type="Gene3D" id="1.20.58.90">
    <property type="match status" value="1"/>
</dbReference>
<dbReference type="Gene3D" id="3.80.10.10">
    <property type="entry name" value="Ribonuclease Inhibitor"/>
    <property type="match status" value="1"/>
</dbReference>
<dbReference type="Gene3D" id="1.20.58.360">
    <property type="entry name" value="Shigella T3SS effector IpaH defines"/>
    <property type="match status" value="1"/>
</dbReference>
<dbReference type="Gene3D" id="1.20.1270.130">
    <property type="entry name" value="Shigella T3SS effector IpaH domain"/>
    <property type="match status" value="1"/>
</dbReference>
<dbReference type="InterPro" id="IPR051071">
    <property type="entry name" value="LRR-bact_E3_ubiq_ligases"/>
</dbReference>
<dbReference type="InterPro" id="IPR032675">
    <property type="entry name" value="LRR_dom_sf"/>
</dbReference>
<dbReference type="InterPro" id="IPR032674">
    <property type="entry name" value="LRR_E3_ligase_N"/>
</dbReference>
<dbReference type="InterPro" id="IPR029487">
    <property type="entry name" value="NEL_dom"/>
</dbReference>
<dbReference type="NCBIfam" id="NF046045">
    <property type="entry name" value="IpaH_Shig"/>
    <property type="match status" value="1"/>
</dbReference>
<dbReference type="PANTHER" id="PTHR47114">
    <property type="match status" value="1"/>
</dbReference>
<dbReference type="PANTHER" id="PTHR47114:SF2">
    <property type="entry name" value="OLIGODENDROCYTE-MYELIN GLYCOPROTEIN"/>
    <property type="match status" value="1"/>
</dbReference>
<dbReference type="Pfam" id="PF12468">
    <property type="entry name" value="LRR_TTSS"/>
    <property type="match status" value="1"/>
</dbReference>
<dbReference type="Pfam" id="PF14496">
    <property type="entry name" value="NEL"/>
    <property type="match status" value="1"/>
</dbReference>
<dbReference type="SMART" id="SM00364">
    <property type="entry name" value="LRR_BAC"/>
    <property type="match status" value="5"/>
</dbReference>
<dbReference type="SUPFAM" id="SSF52058">
    <property type="entry name" value="L domain-like"/>
    <property type="match status" value="1"/>
</dbReference>
<dbReference type="PROSITE" id="PS52053">
    <property type="entry name" value="NEL"/>
    <property type="match status" value="1"/>
</dbReference>
<feature type="chain" id="PRO_0000395758" description="E3 ubiquitin-protein ligase ipaH9.8">
    <location>
        <begin position="1"/>
        <end position="545"/>
    </location>
</feature>
<feature type="repeat" description="LRR 1">
    <location>
        <begin position="57"/>
        <end position="77"/>
    </location>
</feature>
<feature type="repeat" description="LRR 2">
    <location>
        <begin position="78"/>
        <end position="99"/>
    </location>
</feature>
<feature type="repeat" description="LRR 3">
    <location>
        <begin position="100"/>
        <end position="117"/>
    </location>
</feature>
<feature type="repeat" description="LRR 4">
    <location>
        <begin position="118"/>
        <end position="139"/>
    </location>
</feature>
<feature type="repeat" description="LRR 5">
    <location>
        <begin position="140"/>
        <end position="157"/>
    </location>
</feature>
<feature type="repeat" description="LRR 6">
    <location>
        <begin position="158"/>
        <end position="179"/>
    </location>
</feature>
<feature type="repeat" description="LRR 7">
    <location>
        <begin position="182"/>
        <end position="203"/>
    </location>
</feature>
<feature type="repeat" description="LRR 8">
    <location>
        <begin position="205"/>
        <end position="228"/>
    </location>
</feature>
<feature type="domain" description="NEL" evidence="4">
    <location>
        <begin position="253"/>
        <end position="545"/>
    </location>
</feature>
<feature type="region of interest" description="Interaction with target proteins" evidence="2">
    <location>
        <begin position="1"/>
        <end position="242"/>
    </location>
</feature>
<feature type="region of interest" description="Linker" evidence="2">
    <location>
        <begin position="243"/>
        <end position="250"/>
    </location>
</feature>
<feature type="region of interest" description="E3 ubiquitin-protein ligase catalytic domain" evidence="2">
    <location>
        <begin position="251"/>
        <end position="545"/>
    </location>
</feature>
<feature type="active site" description="Glycyl thioester intermediate" evidence="4">
    <location>
        <position position="337"/>
    </location>
</feature>
<name>IPA9_SHIDS</name>
<organism>
    <name type="scientific">Shigella dysenteriae serotype 1 (strain Sd197)</name>
    <dbReference type="NCBI Taxonomy" id="300267"/>
    <lineage>
        <taxon>Bacteria</taxon>
        <taxon>Pseudomonadati</taxon>
        <taxon>Pseudomonadota</taxon>
        <taxon>Gammaproteobacteria</taxon>
        <taxon>Enterobacterales</taxon>
        <taxon>Enterobacteriaceae</taxon>
        <taxon>Shigella</taxon>
    </lineage>
</organism>
<keyword id="KW-1035">Host cytoplasm</keyword>
<keyword id="KW-1048">Host nucleus</keyword>
<keyword id="KW-0433">Leucine-rich repeat</keyword>
<keyword id="KW-0614">Plasmid</keyword>
<keyword id="KW-1185">Reference proteome</keyword>
<keyword id="KW-0677">Repeat</keyword>
<keyword id="KW-0964">Secreted</keyword>
<keyword id="KW-0808">Transferase</keyword>
<keyword id="KW-0832">Ubl conjugation</keyword>
<keyword id="KW-0833">Ubl conjugation pathway</keyword>
<keyword id="KW-0843">Virulence</keyword>
<gene>
    <name type="primary">ipaH9.8</name>
    <name type="ordered locus">SDY_P099</name>
</gene>
<proteinExistence type="inferred from homology"/>
<geneLocation type="plasmid">
    <name>pSD1_197</name>
</geneLocation>
<comment type="function">
    <text evidence="3">Effector E3 ubiquitin ligase that interferes with host's ubiquitination pathway and modulates the acute inflammatory responses, thus facilitating bacterial colonization within the host cell. Interacts with IKBKG (NEMO) and TNIP1 (ABIN-1), a ubiquitin-binding adapter protein, which results in TNIP1-dependent 'Lys-27'-linked polyubiquitination of IKBKG. Consequently, polyubiquitinated IKBKG undergoes proteasome-dependent degradation, which perturbs NF-kappa-B activation during bacterial infection. Mediates polyubiquitination of host U2AF1, leading to its proteasomal degradation. Catalyzes 'Lys-48'-linked polyubiquitination and subsequent degradation of a subset of host guanylate-binding proteins (GBP1, GBP2, GBP4 and GBP6), thereby suppressing host cell defense. In contrast, host GBP3 and GBP7 are not ubiquitinated by IpaH9.8. Uses UBE2D2 (UBCH5B) as an E2 ubiquitin-conjugating enzyme.</text>
</comment>
<comment type="catalytic activity">
    <reaction evidence="3">
        <text>S-ubiquitinyl-[E2 ubiquitin-conjugating enzyme]-L-cysteine + [acceptor protein]-L-lysine = [E2 ubiquitin-conjugating enzyme]-L-cysteine + N(6)-ubiquitinyl-[acceptor protein]-L-lysine.</text>
        <dbReference type="EC" id="2.3.2.27"/>
    </reaction>
</comment>
<comment type="activity regulation">
    <text evidence="3">Exists in an autoinhibited state in the absence of substrate protein, due to interactions of the leucine-rich repeats with NEL domain. Is activated upon binding to a substrate protein.</text>
</comment>
<comment type="subunit">
    <text evidence="3">Also interacts with human and mouse U2AF1 (U2AF35).</text>
</comment>
<comment type="subcellular location">
    <subcellularLocation>
        <location evidence="3">Secreted</location>
    </subcellularLocation>
    <subcellularLocation>
        <location evidence="3">Host cytoplasm</location>
    </subcellularLocation>
    <subcellularLocation>
        <location evidence="3">Host nucleus</location>
    </subcellularLocation>
    <text evidence="3">Secreted via Mxi-Spa type III secretion system (T3SS), and delivered into the host cytoplasm. Transported into the host nucleus. This transport is independent of cytosolic factors, but dependent on temperature and partly on ATP/GTP.</text>
</comment>
<comment type="domain">
    <text evidence="3">The LRR (leucine-rich repeat) repeats are involved in substrate recognition with target proteins.</text>
</comment>
<comment type="PTM">
    <text evidence="1">Ubiquitinated in the presence of host E1 ubiquitin-activating enzyme, E2 ubiquitin-conjugating enzyme and ubiquitin.</text>
</comment>
<comment type="similarity">
    <text evidence="4 5">Belongs to the LRR-containing bacterial E3 ligase family.</text>
</comment>
<comment type="sequence caution" evidence="5">
    <conflict type="erroneous initiation">
        <sequence resource="EMBL-CDS" id="ABB64612"/>
    </conflict>
    <text>Extended N-terminus.</text>
</comment>
<protein>
    <recommendedName>
        <fullName>E3 ubiquitin-protein ligase ipaH9.8</fullName>
        <ecNumber evidence="3">2.3.2.27</ecNumber>
    </recommendedName>
    <alternativeName>
        <fullName>Invasion plasmid antigen ipaH9.8</fullName>
    </alternativeName>
</protein>